<protein>
    <recommendedName>
        <fullName evidence="1">Translation initiation factor IF-1</fullName>
    </recommendedName>
</protein>
<proteinExistence type="inferred from homology"/>
<gene>
    <name evidence="1" type="primary">infA</name>
    <name type="ordered locus">SpyM50066</name>
</gene>
<comment type="function">
    <text evidence="1">One of the essential components for the initiation of protein synthesis. Stabilizes the binding of IF-2 and IF-3 on the 30S subunit to which N-formylmethionyl-tRNA(fMet) subsequently binds. Helps modulate mRNA selection, yielding the 30S pre-initiation complex (PIC). Upon addition of the 50S ribosomal subunit IF-1, IF-2 and IF-3 are released leaving the mature 70S translation initiation complex.</text>
</comment>
<comment type="subunit">
    <text evidence="1">Component of the 30S ribosomal translation pre-initiation complex which assembles on the 30S ribosome in the order IF-2 and IF-3, IF-1 and N-formylmethionyl-tRNA(fMet); mRNA recruitment can occur at any time during PIC assembly.</text>
</comment>
<comment type="subcellular location">
    <subcellularLocation>
        <location evidence="1">Cytoplasm</location>
    </subcellularLocation>
</comment>
<comment type="similarity">
    <text evidence="1">Belongs to the IF-1 family.</text>
</comment>
<sequence>MAKEDVIEIEGKVVETMPNAMFTVELENGHQILATVSGKIRKNYIRILVGDRVTVEMSPYDLTRGRITYRFK</sequence>
<dbReference type="EMBL" id="AM295007">
    <property type="protein sequence ID" value="CAM29408.1"/>
    <property type="molecule type" value="Genomic_DNA"/>
</dbReference>
<dbReference type="RefSeq" id="WP_001040189.1">
    <property type="nucleotide sequence ID" value="NC_009332.1"/>
</dbReference>
<dbReference type="SMR" id="A2RC36"/>
<dbReference type="GeneID" id="98392414"/>
<dbReference type="KEGG" id="spf:SpyM50066"/>
<dbReference type="HOGENOM" id="CLU_151267_1_0_9"/>
<dbReference type="GO" id="GO:0005829">
    <property type="term" value="C:cytosol"/>
    <property type="evidence" value="ECO:0007669"/>
    <property type="project" value="TreeGrafter"/>
</dbReference>
<dbReference type="GO" id="GO:0043022">
    <property type="term" value="F:ribosome binding"/>
    <property type="evidence" value="ECO:0007669"/>
    <property type="project" value="UniProtKB-UniRule"/>
</dbReference>
<dbReference type="GO" id="GO:0019843">
    <property type="term" value="F:rRNA binding"/>
    <property type="evidence" value="ECO:0007669"/>
    <property type="project" value="UniProtKB-UniRule"/>
</dbReference>
<dbReference type="GO" id="GO:0003743">
    <property type="term" value="F:translation initiation factor activity"/>
    <property type="evidence" value="ECO:0007669"/>
    <property type="project" value="UniProtKB-UniRule"/>
</dbReference>
<dbReference type="CDD" id="cd04451">
    <property type="entry name" value="S1_IF1"/>
    <property type="match status" value="1"/>
</dbReference>
<dbReference type="FunFam" id="2.40.50.140:FF:000002">
    <property type="entry name" value="Translation initiation factor IF-1"/>
    <property type="match status" value="1"/>
</dbReference>
<dbReference type="Gene3D" id="2.40.50.140">
    <property type="entry name" value="Nucleic acid-binding proteins"/>
    <property type="match status" value="1"/>
</dbReference>
<dbReference type="HAMAP" id="MF_00075">
    <property type="entry name" value="IF_1"/>
    <property type="match status" value="1"/>
</dbReference>
<dbReference type="InterPro" id="IPR012340">
    <property type="entry name" value="NA-bd_OB-fold"/>
</dbReference>
<dbReference type="InterPro" id="IPR006196">
    <property type="entry name" value="RNA-binding_domain_S1_IF1"/>
</dbReference>
<dbReference type="InterPro" id="IPR003029">
    <property type="entry name" value="S1_domain"/>
</dbReference>
<dbReference type="InterPro" id="IPR004368">
    <property type="entry name" value="TIF_IF1"/>
</dbReference>
<dbReference type="NCBIfam" id="TIGR00008">
    <property type="entry name" value="infA"/>
    <property type="match status" value="1"/>
</dbReference>
<dbReference type="PANTHER" id="PTHR33370">
    <property type="entry name" value="TRANSLATION INITIATION FACTOR IF-1, CHLOROPLASTIC"/>
    <property type="match status" value="1"/>
</dbReference>
<dbReference type="PANTHER" id="PTHR33370:SF1">
    <property type="entry name" value="TRANSLATION INITIATION FACTOR IF-1, CHLOROPLASTIC"/>
    <property type="match status" value="1"/>
</dbReference>
<dbReference type="Pfam" id="PF01176">
    <property type="entry name" value="eIF-1a"/>
    <property type="match status" value="1"/>
</dbReference>
<dbReference type="SMART" id="SM00316">
    <property type="entry name" value="S1"/>
    <property type="match status" value="1"/>
</dbReference>
<dbReference type="SUPFAM" id="SSF50249">
    <property type="entry name" value="Nucleic acid-binding proteins"/>
    <property type="match status" value="1"/>
</dbReference>
<dbReference type="PROSITE" id="PS50832">
    <property type="entry name" value="S1_IF1_TYPE"/>
    <property type="match status" value="1"/>
</dbReference>
<organism>
    <name type="scientific">Streptococcus pyogenes serotype M5 (strain Manfredo)</name>
    <dbReference type="NCBI Taxonomy" id="160491"/>
    <lineage>
        <taxon>Bacteria</taxon>
        <taxon>Bacillati</taxon>
        <taxon>Bacillota</taxon>
        <taxon>Bacilli</taxon>
        <taxon>Lactobacillales</taxon>
        <taxon>Streptococcaceae</taxon>
        <taxon>Streptococcus</taxon>
    </lineage>
</organism>
<reference key="1">
    <citation type="journal article" date="2007" name="J. Bacteriol.">
        <title>Complete genome of acute rheumatic fever-associated serotype M5 Streptococcus pyogenes strain Manfredo.</title>
        <authorList>
            <person name="Holden M.T.G."/>
            <person name="Scott A."/>
            <person name="Cherevach I."/>
            <person name="Chillingworth T."/>
            <person name="Churcher C."/>
            <person name="Cronin A."/>
            <person name="Dowd L."/>
            <person name="Feltwell T."/>
            <person name="Hamlin N."/>
            <person name="Holroyd S."/>
            <person name="Jagels K."/>
            <person name="Moule S."/>
            <person name="Mungall K."/>
            <person name="Quail M.A."/>
            <person name="Price C."/>
            <person name="Rabbinowitsch E."/>
            <person name="Sharp S."/>
            <person name="Skelton J."/>
            <person name="Whitehead S."/>
            <person name="Barrell B.G."/>
            <person name="Kehoe M."/>
            <person name="Parkhill J."/>
        </authorList>
    </citation>
    <scope>NUCLEOTIDE SEQUENCE [LARGE SCALE GENOMIC DNA]</scope>
    <source>
        <strain>Manfredo</strain>
    </source>
</reference>
<evidence type="ECO:0000255" key="1">
    <source>
        <dbReference type="HAMAP-Rule" id="MF_00075"/>
    </source>
</evidence>
<accession>A2RC36</accession>
<keyword id="KW-0963">Cytoplasm</keyword>
<keyword id="KW-0396">Initiation factor</keyword>
<keyword id="KW-0648">Protein biosynthesis</keyword>
<keyword id="KW-0694">RNA-binding</keyword>
<keyword id="KW-0699">rRNA-binding</keyword>
<feature type="chain" id="PRO_0000338936" description="Translation initiation factor IF-1">
    <location>
        <begin position="1"/>
        <end position="72"/>
    </location>
</feature>
<feature type="domain" description="S1-like" evidence="1">
    <location>
        <begin position="1"/>
        <end position="72"/>
    </location>
</feature>
<name>IF1_STRPG</name>